<keyword id="KW-0175">Coiled coil</keyword>
<keyword id="KW-0963">Cytoplasm</keyword>
<keyword id="KW-0396">Initiation factor</keyword>
<keyword id="KW-0648">Protein biosynthesis</keyword>
<keyword id="KW-1185">Reference proteome</keyword>
<feature type="chain" id="PRO_0000365144" description="Eukaryotic translation initiation factor 3 subunit J">
    <location>
        <begin position="1"/>
        <end position="247"/>
    </location>
</feature>
<feature type="region of interest" description="Disordered" evidence="2">
    <location>
        <begin position="1"/>
        <end position="64"/>
    </location>
</feature>
<feature type="region of interest" description="Disordered" evidence="2">
    <location>
        <begin position="77"/>
        <end position="101"/>
    </location>
</feature>
<feature type="coiled-coil region" evidence="1">
    <location>
        <begin position="43"/>
        <end position="108"/>
    </location>
</feature>
<feature type="compositionally biased region" description="Acidic residues" evidence="2">
    <location>
        <begin position="24"/>
        <end position="45"/>
    </location>
</feature>
<protein>
    <recommendedName>
        <fullName evidence="1">Eukaryotic translation initiation factor 3 subunit J</fullName>
        <shortName evidence="1">eIF3j</shortName>
    </recommendedName>
</protein>
<name>EIF3J_NEMVE</name>
<reference key="1">
    <citation type="journal article" date="2007" name="Science">
        <title>Sea anemone genome reveals ancestral eumetazoan gene repertoire and genomic organization.</title>
        <authorList>
            <person name="Putnam N.H."/>
            <person name="Srivastava M."/>
            <person name="Hellsten U."/>
            <person name="Dirks B."/>
            <person name="Chapman J."/>
            <person name="Salamov A."/>
            <person name="Terry A."/>
            <person name="Shapiro H."/>
            <person name="Lindquist E."/>
            <person name="Kapitonov V.V."/>
            <person name="Jurka J."/>
            <person name="Genikhovich G."/>
            <person name="Grigoriev I.V."/>
            <person name="Lucas S.M."/>
            <person name="Steele R.E."/>
            <person name="Finnerty J.R."/>
            <person name="Technau U."/>
            <person name="Martindale M.Q."/>
            <person name="Rokhsar D.S."/>
        </authorList>
    </citation>
    <scope>NUCLEOTIDE SEQUENCE [LARGE SCALE GENOMIC DNA]</scope>
    <source>
        <strain>CH2 X CH6</strain>
    </source>
</reference>
<comment type="function">
    <text evidence="1">Component of the eukaryotic translation initiation factor 3 (eIF-3) complex, which is involved in protein synthesis of a specialized repertoire of mRNAs and, together with other initiation factors, stimulates binding of mRNA and methionyl-tRNAi to the 40S ribosome. The eIF-3 complex specifically targets and initiates translation of a subset of mRNAs involved in cell proliferation.</text>
</comment>
<comment type="subunit">
    <text evidence="1">Component of the eukaryotic translation initiation factor 3 (eIF-3) complex.</text>
</comment>
<comment type="subcellular location">
    <subcellularLocation>
        <location evidence="1">Cytoplasm</location>
    </subcellularLocation>
</comment>
<comment type="similarity">
    <text evidence="1">Belongs to the eIF-3 subunit J family.</text>
</comment>
<gene>
    <name type="ORF">v1g240395</name>
</gene>
<evidence type="ECO:0000255" key="1">
    <source>
        <dbReference type="HAMAP-Rule" id="MF_03009"/>
    </source>
</evidence>
<evidence type="ECO:0000256" key="2">
    <source>
        <dbReference type="SAM" id="MobiDB-lite"/>
    </source>
</evidence>
<sequence length="247" mass="28370">MADWDDEKFEPGEVPADGVTDKWEGEDEDDDIKESWDDDDEDEKKEDEAKNTEAAAPKKKKTLKQILKEKEEQKLLEEKRKAEEKQKLEEEDKELTPEEQMAEKLRRQKIVEESDLLVAMDTFGVGTQEEASRTGLDSMIPSTKEEFTEYSKLLVEKLTKFETNPEYIPFLEATLREICVSLDPEDIKKLSSTLNMLQSEKLKAQKGKKAKSKATKKATLTGGAKMGRKDEMDYSYGDLGNEYDDFM</sequence>
<dbReference type="EMBL" id="DS469534">
    <property type="protein sequence ID" value="EDO45638.1"/>
    <property type="molecule type" value="Genomic_DNA"/>
</dbReference>
<dbReference type="RefSeq" id="XP_001637701.1">
    <property type="nucleotide sequence ID" value="XM_001637651.1"/>
</dbReference>
<dbReference type="SMR" id="A7RSH7"/>
<dbReference type="FunCoup" id="A7RSH7">
    <property type="interactions" value="621"/>
</dbReference>
<dbReference type="STRING" id="45351.A7RSH7"/>
<dbReference type="EnsemblMetazoa" id="EDO45638">
    <property type="protein sequence ID" value="EDO45638"/>
    <property type="gene ID" value="NEMVEDRAFT_v1g240395"/>
</dbReference>
<dbReference type="KEGG" id="nve:5517623"/>
<dbReference type="eggNOG" id="KOG4813">
    <property type="taxonomic scope" value="Eukaryota"/>
</dbReference>
<dbReference type="HOGENOM" id="CLU_085806_2_1_1"/>
<dbReference type="InParanoid" id="A7RSH7"/>
<dbReference type="OMA" id="KNIANTW"/>
<dbReference type="OrthoDB" id="20381at2759"/>
<dbReference type="PhylomeDB" id="A7RSH7"/>
<dbReference type="Proteomes" id="UP000001593">
    <property type="component" value="Unassembled WGS sequence"/>
</dbReference>
<dbReference type="GO" id="GO:0016282">
    <property type="term" value="C:eukaryotic 43S preinitiation complex"/>
    <property type="evidence" value="ECO:0007669"/>
    <property type="project" value="UniProtKB-UniRule"/>
</dbReference>
<dbReference type="GO" id="GO:0033290">
    <property type="term" value="C:eukaryotic 48S preinitiation complex"/>
    <property type="evidence" value="ECO:0007669"/>
    <property type="project" value="UniProtKB-UniRule"/>
</dbReference>
<dbReference type="GO" id="GO:0005852">
    <property type="term" value="C:eukaryotic translation initiation factor 3 complex"/>
    <property type="evidence" value="ECO:0000318"/>
    <property type="project" value="GO_Central"/>
</dbReference>
<dbReference type="GO" id="GO:0003743">
    <property type="term" value="F:translation initiation factor activity"/>
    <property type="evidence" value="ECO:0007669"/>
    <property type="project" value="UniProtKB-UniRule"/>
</dbReference>
<dbReference type="GO" id="GO:0001732">
    <property type="term" value="P:formation of cytoplasmic translation initiation complex"/>
    <property type="evidence" value="ECO:0007669"/>
    <property type="project" value="UniProtKB-UniRule"/>
</dbReference>
<dbReference type="FunFam" id="1.10.246.60:FF:000001">
    <property type="entry name" value="Eukaryotic translation initiation factor 3 subunit J"/>
    <property type="match status" value="1"/>
</dbReference>
<dbReference type="Gene3D" id="1.10.246.60">
    <property type="entry name" value="Eukaryotic translation initiation factor 3 like domains"/>
    <property type="match status" value="1"/>
</dbReference>
<dbReference type="HAMAP" id="MF_03009">
    <property type="entry name" value="eIF3j"/>
    <property type="match status" value="1"/>
</dbReference>
<dbReference type="InterPro" id="IPR023194">
    <property type="entry name" value="eIF3-like_dom_sf"/>
</dbReference>
<dbReference type="InterPro" id="IPR013906">
    <property type="entry name" value="eIF3j"/>
</dbReference>
<dbReference type="PANTHER" id="PTHR21681">
    <property type="entry name" value="EUKARYOTIC TRANSLATION INITIATION FACTOR 3 SUBUNIT J"/>
    <property type="match status" value="1"/>
</dbReference>
<dbReference type="PANTHER" id="PTHR21681:SF0">
    <property type="entry name" value="EUKARYOTIC TRANSLATION INITIATION FACTOR 3 SUBUNIT J"/>
    <property type="match status" value="1"/>
</dbReference>
<dbReference type="Pfam" id="PF08597">
    <property type="entry name" value="eIF3_subunit"/>
    <property type="match status" value="1"/>
</dbReference>
<proteinExistence type="inferred from homology"/>
<accession>A7RSH7</accession>
<organism>
    <name type="scientific">Nematostella vectensis</name>
    <name type="common">Starlet sea anemone</name>
    <dbReference type="NCBI Taxonomy" id="45351"/>
    <lineage>
        <taxon>Eukaryota</taxon>
        <taxon>Metazoa</taxon>
        <taxon>Cnidaria</taxon>
        <taxon>Anthozoa</taxon>
        <taxon>Hexacorallia</taxon>
        <taxon>Actiniaria</taxon>
        <taxon>Edwardsiidae</taxon>
        <taxon>Nematostella</taxon>
    </lineage>
</organism>